<accession>B9LEM0</accession>
<organism>
    <name type="scientific">Chloroflexus aurantiacus (strain ATCC 29364 / DSM 637 / Y-400-fl)</name>
    <dbReference type="NCBI Taxonomy" id="480224"/>
    <lineage>
        <taxon>Bacteria</taxon>
        <taxon>Bacillati</taxon>
        <taxon>Chloroflexota</taxon>
        <taxon>Chloroflexia</taxon>
        <taxon>Chloroflexales</taxon>
        <taxon>Chloroflexineae</taxon>
        <taxon>Chloroflexaceae</taxon>
        <taxon>Chloroflexus</taxon>
    </lineage>
</organism>
<comment type="similarity">
    <text evidence="1">Belongs to the universal ribosomal protein uS2 family.</text>
</comment>
<feature type="chain" id="PRO_1000194329" description="Small ribosomal subunit protein uS2">
    <location>
        <begin position="1"/>
        <end position="238"/>
    </location>
</feature>
<protein>
    <recommendedName>
        <fullName evidence="1">Small ribosomal subunit protein uS2</fullName>
    </recommendedName>
    <alternativeName>
        <fullName evidence="2">30S ribosomal protein S2</fullName>
    </alternativeName>
</protein>
<sequence length="238" mass="26846">MTQALPRVVTIRELLEAGAHFGHPTNRWNPKMKPYIFTARNGIHIIDLQKTVTGLSRAYQFITELTARGEKVLFVGTKKQAQEAVMEEAVRSGQFYINQRWLGGTLTNFATIKRRLKLLSDLEEQRDRGDFARLTKAEAAKLEEKIVRLNRVFAGLKGMDRLPGAVFIIDPRKEELAVREAVKEGIPIVAMVDTNCDPDPIDYVIPCNDDAIRGIRLMAGKIADAAIEGTRRREMSQE</sequence>
<keyword id="KW-0687">Ribonucleoprotein</keyword>
<keyword id="KW-0689">Ribosomal protein</keyword>
<name>RS2_CHLSY</name>
<dbReference type="EMBL" id="CP001364">
    <property type="protein sequence ID" value="ACM55212.1"/>
    <property type="molecule type" value="Genomic_DNA"/>
</dbReference>
<dbReference type="SMR" id="B9LEM0"/>
<dbReference type="KEGG" id="chl:Chy400_3846"/>
<dbReference type="HOGENOM" id="CLU_040318_1_2_0"/>
<dbReference type="OrthoDB" id="9808036at2"/>
<dbReference type="GO" id="GO:0022627">
    <property type="term" value="C:cytosolic small ribosomal subunit"/>
    <property type="evidence" value="ECO:0007669"/>
    <property type="project" value="TreeGrafter"/>
</dbReference>
<dbReference type="GO" id="GO:0003735">
    <property type="term" value="F:structural constituent of ribosome"/>
    <property type="evidence" value="ECO:0007669"/>
    <property type="project" value="InterPro"/>
</dbReference>
<dbReference type="GO" id="GO:0006412">
    <property type="term" value="P:translation"/>
    <property type="evidence" value="ECO:0007669"/>
    <property type="project" value="UniProtKB-UniRule"/>
</dbReference>
<dbReference type="CDD" id="cd01425">
    <property type="entry name" value="RPS2"/>
    <property type="match status" value="1"/>
</dbReference>
<dbReference type="Gene3D" id="3.40.50.10490">
    <property type="entry name" value="Glucose-6-phosphate isomerase like protein, domain 1"/>
    <property type="match status" value="1"/>
</dbReference>
<dbReference type="Gene3D" id="1.10.287.610">
    <property type="entry name" value="Helix hairpin bin"/>
    <property type="match status" value="1"/>
</dbReference>
<dbReference type="HAMAP" id="MF_00291_B">
    <property type="entry name" value="Ribosomal_uS2_B"/>
    <property type="match status" value="1"/>
</dbReference>
<dbReference type="InterPro" id="IPR001865">
    <property type="entry name" value="Ribosomal_uS2"/>
</dbReference>
<dbReference type="InterPro" id="IPR005706">
    <property type="entry name" value="Ribosomal_uS2_bac/mit/plastid"/>
</dbReference>
<dbReference type="InterPro" id="IPR018130">
    <property type="entry name" value="Ribosomal_uS2_CS"/>
</dbReference>
<dbReference type="InterPro" id="IPR023591">
    <property type="entry name" value="Ribosomal_uS2_flav_dom_sf"/>
</dbReference>
<dbReference type="NCBIfam" id="TIGR01011">
    <property type="entry name" value="rpsB_bact"/>
    <property type="match status" value="1"/>
</dbReference>
<dbReference type="PANTHER" id="PTHR12534">
    <property type="entry name" value="30S RIBOSOMAL PROTEIN S2 PROKARYOTIC AND ORGANELLAR"/>
    <property type="match status" value="1"/>
</dbReference>
<dbReference type="PANTHER" id="PTHR12534:SF0">
    <property type="entry name" value="SMALL RIBOSOMAL SUBUNIT PROTEIN US2M"/>
    <property type="match status" value="1"/>
</dbReference>
<dbReference type="Pfam" id="PF00318">
    <property type="entry name" value="Ribosomal_S2"/>
    <property type="match status" value="1"/>
</dbReference>
<dbReference type="PRINTS" id="PR00395">
    <property type="entry name" value="RIBOSOMALS2"/>
</dbReference>
<dbReference type="SUPFAM" id="SSF52313">
    <property type="entry name" value="Ribosomal protein S2"/>
    <property type="match status" value="1"/>
</dbReference>
<dbReference type="PROSITE" id="PS00962">
    <property type="entry name" value="RIBOSOMAL_S2_1"/>
    <property type="match status" value="1"/>
</dbReference>
<dbReference type="PROSITE" id="PS00963">
    <property type="entry name" value="RIBOSOMAL_S2_2"/>
    <property type="match status" value="1"/>
</dbReference>
<evidence type="ECO:0000255" key="1">
    <source>
        <dbReference type="HAMAP-Rule" id="MF_00291"/>
    </source>
</evidence>
<evidence type="ECO:0000305" key="2"/>
<gene>
    <name evidence="1" type="primary">rpsB</name>
    <name type="ordered locus">Chy400_3846</name>
</gene>
<reference key="1">
    <citation type="submission" date="2009-01" db="EMBL/GenBank/DDBJ databases">
        <title>Complete sequence of Chloroflexus sp. Y-400-fl.</title>
        <authorList>
            <consortium name="US DOE Joint Genome Institute"/>
            <person name="Lucas S."/>
            <person name="Copeland A."/>
            <person name="Lapidus A."/>
            <person name="Glavina del Rio T."/>
            <person name="Dalin E."/>
            <person name="Tice H."/>
            <person name="Bruce D."/>
            <person name="Goodwin L."/>
            <person name="Pitluck S."/>
            <person name="Sims D."/>
            <person name="Kiss H."/>
            <person name="Brettin T."/>
            <person name="Detter J.C."/>
            <person name="Han C."/>
            <person name="Larimer F."/>
            <person name="Land M."/>
            <person name="Hauser L."/>
            <person name="Kyrpides N."/>
            <person name="Ovchinnikova G."/>
            <person name="Bryant D.A."/>
            <person name="Richardson P."/>
        </authorList>
    </citation>
    <scope>NUCLEOTIDE SEQUENCE [LARGE SCALE GENOMIC DNA]</scope>
    <source>
        <strain>ATCC 29364 / DSM 637 / Y-400-fl</strain>
    </source>
</reference>
<proteinExistence type="inferred from homology"/>